<gene>
    <name evidence="1" type="primary">atpF</name>
    <name type="ordered locus">Pnap_0251</name>
</gene>
<sequence>MNINSTLFLQAVVFAILVWFTMKFVWPPITKALDERAQKIADGLAAADKAKSELSSANKRVEAELATSRTETATRLADADRRGQGIIEDAKARAVEEANKIIAAAQAEAAQQSVKAREALREQVALLAVKGAEQILRKEVNAGVHADLLSRLKTEL</sequence>
<comment type="function">
    <text evidence="1">F(1)F(0) ATP synthase produces ATP from ADP in the presence of a proton or sodium gradient. F-type ATPases consist of two structural domains, F(1) containing the extramembraneous catalytic core and F(0) containing the membrane proton channel, linked together by a central stalk and a peripheral stalk. During catalysis, ATP synthesis in the catalytic domain of F(1) is coupled via a rotary mechanism of the central stalk subunits to proton translocation.</text>
</comment>
<comment type="function">
    <text evidence="1">Component of the F(0) channel, it forms part of the peripheral stalk, linking F(1) to F(0).</text>
</comment>
<comment type="subunit">
    <text evidence="1">F-type ATPases have 2 components, F(1) - the catalytic core - and F(0) - the membrane proton channel. F(1) has five subunits: alpha(3), beta(3), gamma(1), delta(1), epsilon(1). F(0) has three main subunits: a(1), b(2) and c(10-14). The alpha and beta chains form an alternating ring which encloses part of the gamma chain. F(1) is attached to F(0) by a central stalk formed by the gamma and epsilon chains, while a peripheral stalk is formed by the delta and b chains.</text>
</comment>
<comment type="subcellular location">
    <subcellularLocation>
        <location evidence="1">Cell inner membrane</location>
        <topology evidence="1">Single-pass membrane protein</topology>
    </subcellularLocation>
</comment>
<comment type="similarity">
    <text evidence="1">Belongs to the ATPase B chain family.</text>
</comment>
<name>ATPF_POLNA</name>
<feature type="chain" id="PRO_0000368658" description="ATP synthase subunit b">
    <location>
        <begin position="1"/>
        <end position="156"/>
    </location>
</feature>
<feature type="transmembrane region" description="Helical" evidence="1">
    <location>
        <begin position="7"/>
        <end position="27"/>
    </location>
</feature>
<reference key="1">
    <citation type="journal article" date="2009" name="Environ. Microbiol.">
        <title>The genome of Polaromonas naphthalenivorans strain CJ2, isolated from coal tar-contaminated sediment, reveals physiological and metabolic versatility and evolution through extensive horizontal gene transfer.</title>
        <authorList>
            <person name="Yagi J.M."/>
            <person name="Sims D."/>
            <person name="Brettin T."/>
            <person name="Bruce D."/>
            <person name="Madsen E.L."/>
        </authorList>
    </citation>
    <scope>NUCLEOTIDE SEQUENCE [LARGE SCALE GENOMIC DNA]</scope>
    <source>
        <strain>CJ2</strain>
    </source>
</reference>
<evidence type="ECO:0000255" key="1">
    <source>
        <dbReference type="HAMAP-Rule" id="MF_01398"/>
    </source>
</evidence>
<organism>
    <name type="scientific">Polaromonas naphthalenivorans (strain CJ2)</name>
    <dbReference type="NCBI Taxonomy" id="365044"/>
    <lineage>
        <taxon>Bacteria</taxon>
        <taxon>Pseudomonadati</taxon>
        <taxon>Pseudomonadota</taxon>
        <taxon>Betaproteobacteria</taxon>
        <taxon>Burkholderiales</taxon>
        <taxon>Comamonadaceae</taxon>
        <taxon>Polaromonas</taxon>
    </lineage>
</organism>
<accession>A1VIU8</accession>
<dbReference type="EMBL" id="CP000529">
    <property type="protein sequence ID" value="ABM35576.1"/>
    <property type="molecule type" value="Genomic_DNA"/>
</dbReference>
<dbReference type="RefSeq" id="WP_011799684.1">
    <property type="nucleotide sequence ID" value="NC_008781.1"/>
</dbReference>
<dbReference type="SMR" id="A1VIU8"/>
<dbReference type="STRING" id="365044.Pnap_0251"/>
<dbReference type="KEGG" id="pna:Pnap_0251"/>
<dbReference type="eggNOG" id="COG0711">
    <property type="taxonomic scope" value="Bacteria"/>
</dbReference>
<dbReference type="HOGENOM" id="CLU_079215_4_5_4"/>
<dbReference type="OrthoDB" id="9788020at2"/>
<dbReference type="Proteomes" id="UP000000644">
    <property type="component" value="Chromosome"/>
</dbReference>
<dbReference type="GO" id="GO:0005886">
    <property type="term" value="C:plasma membrane"/>
    <property type="evidence" value="ECO:0007669"/>
    <property type="project" value="UniProtKB-SubCell"/>
</dbReference>
<dbReference type="GO" id="GO:0045259">
    <property type="term" value="C:proton-transporting ATP synthase complex"/>
    <property type="evidence" value="ECO:0007669"/>
    <property type="project" value="UniProtKB-KW"/>
</dbReference>
<dbReference type="GO" id="GO:0046933">
    <property type="term" value="F:proton-transporting ATP synthase activity, rotational mechanism"/>
    <property type="evidence" value="ECO:0007669"/>
    <property type="project" value="UniProtKB-UniRule"/>
</dbReference>
<dbReference type="GO" id="GO:0046961">
    <property type="term" value="F:proton-transporting ATPase activity, rotational mechanism"/>
    <property type="evidence" value="ECO:0007669"/>
    <property type="project" value="TreeGrafter"/>
</dbReference>
<dbReference type="CDD" id="cd06503">
    <property type="entry name" value="ATP-synt_Fo_b"/>
    <property type="match status" value="1"/>
</dbReference>
<dbReference type="Gene3D" id="6.10.250.1580">
    <property type="match status" value="1"/>
</dbReference>
<dbReference type="HAMAP" id="MF_01398">
    <property type="entry name" value="ATP_synth_b_bprime"/>
    <property type="match status" value="1"/>
</dbReference>
<dbReference type="InterPro" id="IPR028987">
    <property type="entry name" value="ATP_synth_B-like_membr_sf"/>
</dbReference>
<dbReference type="InterPro" id="IPR002146">
    <property type="entry name" value="ATP_synth_b/b'su_bac/chlpt"/>
</dbReference>
<dbReference type="InterPro" id="IPR005864">
    <property type="entry name" value="ATP_synth_F0_bsu_bac"/>
</dbReference>
<dbReference type="InterPro" id="IPR050059">
    <property type="entry name" value="ATP_synthase_B_chain"/>
</dbReference>
<dbReference type="NCBIfam" id="TIGR01144">
    <property type="entry name" value="ATP_synt_b"/>
    <property type="match status" value="1"/>
</dbReference>
<dbReference type="NCBIfam" id="NF004411">
    <property type="entry name" value="PRK05759.1-2"/>
    <property type="match status" value="1"/>
</dbReference>
<dbReference type="PANTHER" id="PTHR33445:SF1">
    <property type="entry name" value="ATP SYNTHASE SUBUNIT B"/>
    <property type="match status" value="1"/>
</dbReference>
<dbReference type="PANTHER" id="PTHR33445">
    <property type="entry name" value="ATP SYNTHASE SUBUNIT B', CHLOROPLASTIC"/>
    <property type="match status" value="1"/>
</dbReference>
<dbReference type="Pfam" id="PF00430">
    <property type="entry name" value="ATP-synt_B"/>
    <property type="match status" value="1"/>
</dbReference>
<dbReference type="SUPFAM" id="SSF81573">
    <property type="entry name" value="F1F0 ATP synthase subunit B, membrane domain"/>
    <property type="match status" value="1"/>
</dbReference>
<protein>
    <recommendedName>
        <fullName evidence="1">ATP synthase subunit b</fullName>
    </recommendedName>
    <alternativeName>
        <fullName evidence="1">ATP synthase F(0) sector subunit b</fullName>
    </alternativeName>
    <alternativeName>
        <fullName evidence="1">ATPase subunit I</fullName>
    </alternativeName>
    <alternativeName>
        <fullName evidence="1">F-type ATPase subunit b</fullName>
        <shortName evidence="1">F-ATPase subunit b</shortName>
    </alternativeName>
</protein>
<proteinExistence type="inferred from homology"/>
<keyword id="KW-0066">ATP synthesis</keyword>
<keyword id="KW-0997">Cell inner membrane</keyword>
<keyword id="KW-1003">Cell membrane</keyword>
<keyword id="KW-0138">CF(0)</keyword>
<keyword id="KW-0375">Hydrogen ion transport</keyword>
<keyword id="KW-0406">Ion transport</keyword>
<keyword id="KW-0472">Membrane</keyword>
<keyword id="KW-1185">Reference proteome</keyword>
<keyword id="KW-0812">Transmembrane</keyword>
<keyword id="KW-1133">Transmembrane helix</keyword>
<keyword id="KW-0813">Transport</keyword>